<organism>
    <name type="scientific">Arabidopsis thaliana</name>
    <name type="common">Mouse-ear cress</name>
    <dbReference type="NCBI Taxonomy" id="3702"/>
    <lineage>
        <taxon>Eukaryota</taxon>
        <taxon>Viridiplantae</taxon>
        <taxon>Streptophyta</taxon>
        <taxon>Embryophyta</taxon>
        <taxon>Tracheophyta</taxon>
        <taxon>Spermatophyta</taxon>
        <taxon>Magnoliopsida</taxon>
        <taxon>eudicotyledons</taxon>
        <taxon>Gunneridae</taxon>
        <taxon>Pentapetalae</taxon>
        <taxon>rosids</taxon>
        <taxon>malvids</taxon>
        <taxon>Brassicales</taxon>
        <taxon>Brassicaceae</taxon>
        <taxon>Camelineae</taxon>
        <taxon>Arabidopsis</taxon>
    </lineage>
</organism>
<comment type="function">
    <text evidence="3">Acylhydrolase that catalyzes the hydrolysis of phosphatidylcholine (PC) at the sn-1 position. High activity toward PC, medium activity toward monogalactosyldiacylglycerol (MGDG) and low activity toward triacylglycerol (TAG). Confers sensitivity to UV-B radiation probably by deesterifying membrane phospholipids.</text>
</comment>
<comment type="subcellular location">
    <subcellularLocation>
        <location evidence="3">Cytoplasm</location>
    </subcellularLocation>
</comment>
<comment type="alternative products">
    <event type="alternative splicing"/>
    <isoform>
        <id>Q9SJI7-1</id>
        <name>1</name>
        <sequence type="displayed"/>
    </isoform>
    <isoform>
        <id>Q9SJI7-2</id>
        <name>2</name>
        <sequence type="described" ref="VSP_041299 VSP_041300"/>
    </isoform>
</comment>
<comment type="tissue specificity">
    <text evidence="3">Expressed in leaves, stems, flowers and siliques, and, at low levels, in seeds and roots (at protein level).</text>
</comment>
<comment type="induction">
    <text evidence="3">Strongly induced in response to sublethal levels of UV-B radiation. Down-regulated as the leaves senesce.</text>
</comment>
<comment type="disruption phenotype">
    <text evidence="3">Enhanced tolerance to UV-B stress but not osmotic stress. Impaired PR-1 accumulation in response to UV-B.</text>
</comment>
<comment type="similarity">
    <text evidence="5">Belongs to the AB hydrolase superfamily. Lipase family.</text>
</comment>
<accession>Q9SJI7</accession>
<accession>C0Z2D7</accession>
<feature type="initiator methionine" description="Removed" evidence="6">
    <location>
        <position position="1"/>
    </location>
</feature>
<feature type="chain" id="PRO_0000409360" description="Phospholipase A1-IIdelta">
    <location>
        <begin position="2"/>
        <end position="412"/>
    </location>
</feature>
<feature type="active site" description="Acyl-ester intermediate" evidence="1">
    <location>
        <position position="238"/>
    </location>
</feature>
<feature type="active site" description="Charge relay system" evidence="2">
    <location>
        <position position="238"/>
    </location>
</feature>
<feature type="active site" description="Charge relay system" evidence="2">
    <location>
        <position position="297"/>
    </location>
</feature>
<feature type="active site" description="Charge relay system" evidence="2">
    <location>
        <position position="336"/>
    </location>
</feature>
<feature type="modified residue" description="N-acetylalanine" evidence="6">
    <location>
        <position position="2"/>
    </location>
</feature>
<feature type="splice variant" id="VSP_041299" description="In isoform 2." evidence="4">
    <original>AMLHVVAGWNGKKGEFKLMVKRSIALVNKSCEFLKAECLVPGSWW</original>
    <variation>VRICEKNLSNLTQTIQSRNFYIFFPCMCAGDVTCCSWMEWEERRV</variation>
    <location>
        <begin position="340"/>
        <end position="384"/>
    </location>
</feature>
<feature type="splice variant" id="VSP_041300" description="In isoform 2." evidence="4">
    <location>
        <begin position="385"/>
        <end position="412"/>
    </location>
</feature>
<name>PLA20_ARATH</name>
<evidence type="ECO:0000250" key="1"/>
<evidence type="ECO:0000255" key="2">
    <source>
        <dbReference type="PROSITE-ProRule" id="PRU10037"/>
    </source>
</evidence>
<evidence type="ECO:0000269" key="3">
    <source>
    </source>
</evidence>
<evidence type="ECO:0000303" key="4">
    <source>
    </source>
</evidence>
<evidence type="ECO:0000305" key="5"/>
<evidence type="ECO:0007744" key="6">
    <source>
    </source>
</evidence>
<keyword id="KW-0007">Acetylation</keyword>
<keyword id="KW-0025">Alternative splicing</keyword>
<keyword id="KW-0963">Cytoplasm</keyword>
<keyword id="KW-0378">Hydrolase</keyword>
<keyword id="KW-0442">Lipid degradation</keyword>
<keyword id="KW-0443">Lipid metabolism</keyword>
<keyword id="KW-1185">Reference proteome</keyword>
<dbReference type="EC" id="3.1.1.-"/>
<dbReference type="EMBL" id="AC006931">
    <property type="protein sequence ID" value="AAD21737.1"/>
    <property type="molecule type" value="Genomic_DNA"/>
</dbReference>
<dbReference type="EMBL" id="AC007087">
    <property type="protein sequence ID" value="AAM15382.1"/>
    <property type="molecule type" value="Genomic_DNA"/>
</dbReference>
<dbReference type="EMBL" id="CP002685">
    <property type="protein sequence ID" value="AEC10156.1"/>
    <property type="molecule type" value="Genomic_DNA"/>
</dbReference>
<dbReference type="EMBL" id="AY050998">
    <property type="protein sequence ID" value="AAK93675.1"/>
    <property type="molecule type" value="mRNA"/>
</dbReference>
<dbReference type="EMBL" id="AY079356">
    <property type="protein sequence ID" value="AAL85087.1"/>
    <property type="molecule type" value="mRNA"/>
</dbReference>
<dbReference type="EMBL" id="AK318751">
    <property type="protein sequence ID" value="BAH56866.1"/>
    <property type="molecule type" value="mRNA"/>
</dbReference>
<dbReference type="PIR" id="A84857">
    <property type="entry name" value="A84857"/>
</dbReference>
<dbReference type="RefSeq" id="NP_181797.1">
    <molecule id="Q9SJI7-1"/>
    <property type="nucleotide sequence ID" value="NM_129830.2"/>
</dbReference>
<dbReference type="SMR" id="Q9SJI7"/>
<dbReference type="FunCoup" id="Q9SJI7">
    <property type="interactions" value="840"/>
</dbReference>
<dbReference type="STRING" id="3702.Q9SJI7"/>
<dbReference type="ESTHER" id="arath-AT2G42690">
    <property type="family name" value="Plant_phospholipase"/>
</dbReference>
<dbReference type="iPTMnet" id="Q9SJI7"/>
<dbReference type="PaxDb" id="3702-AT2G42690.1"/>
<dbReference type="ProteomicsDB" id="226198">
    <molecule id="Q9SJI7-1"/>
</dbReference>
<dbReference type="EnsemblPlants" id="AT2G42690.1">
    <molecule id="Q9SJI7-1"/>
    <property type="protein sequence ID" value="AT2G42690.1"/>
    <property type="gene ID" value="AT2G42690"/>
</dbReference>
<dbReference type="GeneID" id="818869"/>
<dbReference type="Gramene" id="AT2G42690.1">
    <molecule id="Q9SJI7-1"/>
    <property type="protein sequence ID" value="AT2G42690.1"/>
    <property type="gene ID" value="AT2G42690"/>
</dbReference>
<dbReference type="KEGG" id="ath:AT2G42690"/>
<dbReference type="Araport" id="AT2G42690"/>
<dbReference type="TAIR" id="AT2G42690"/>
<dbReference type="eggNOG" id="KOG4569">
    <property type="taxonomic scope" value="Eukaryota"/>
</dbReference>
<dbReference type="HOGENOM" id="CLU_018841_0_0_1"/>
<dbReference type="InParanoid" id="Q9SJI7"/>
<dbReference type="OMA" id="LLGCKNW"/>
<dbReference type="OrthoDB" id="438440at2759"/>
<dbReference type="PhylomeDB" id="Q9SJI7"/>
<dbReference type="BioCyc" id="ARA:AT2G42690-MONOMER"/>
<dbReference type="PRO" id="PR:Q9SJI7"/>
<dbReference type="Proteomes" id="UP000006548">
    <property type="component" value="Chromosome 2"/>
</dbReference>
<dbReference type="ExpressionAtlas" id="Q9SJI7">
    <property type="expression patterns" value="baseline and differential"/>
</dbReference>
<dbReference type="GO" id="GO:0005737">
    <property type="term" value="C:cytoplasm"/>
    <property type="evidence" value="ECO:0000314"/>
    <property type="project" value="UniProtKB"/>
</dbReference>
<dbReference type="GO" id="GO:0005829">
    <property type="term" value="C:cytosol"/>
    <property type="evidence" value="ECO:0007005"/>
    <property type="project" value="TAIR"/>
</dbReference>
<dbReference type="GO" id="GO:0008970">
    <property type="term" value="F:phospholipase A1 activity"/>
    <property type="evidence" value="ECO:0000314"/>
    <property type="project" value="UniProtKB"/>
</dbReference>
<dbReference type="GO" id="GO:0071493">
    <property type="term" value="P:cellular response to UV-B"/>
    <property type="evidence" value="ECO:0000270"/>
    <property type="project" value="UniProtKB"/>
</dbReference>
<dbReference type="GO" id="GO:0016042">
    <property type="term" value="P:lipid catabolic process"/>
    <property type="evidence" value="ECO:0007669"/>
    <property type="project" value="UniProtKB-KW"/>
</dbReference>
<dbReference type="GO" id="GO:0009650">
    <property type="term" value="P:UV protection"/>
    <property type="evidence" value="ECO:0000315"/>
    <property type="project" value="UniProtKB"/>
</dbReference>
<dbReference type="CDD" id="cd00519">
    <property type="entry name" value="Lipase_3"/>
    <property type="match status" value="1"/>
</dbReference>
<dbReference type="FunFam" id="3.40.50.1820:FF:000065">
    <property type="entry name" value="Phospholipase A1-II 3"/>
    <property type="match status" value="1"/>
</dbReference>
<dbReference type="Gene3D" id="3.40.50.1820">
    <property type="entry name" value="alpha/beta hydrolase"/>
    <property type="match status" value="1"/>
</dbReference>
<dbReference type="InterPro" id="IPR029058">
    <property type="entry name" value="AB_hydrolase_fold"/>
</dbReference>
<dbReference type="InterPro" id="IPR002921">
    <property type="entry name" value="Fungal_lipase-type"/>
</dbReference>
<dbReference type="InterPro" id="IPR033556">
    <property type="entry name" value="PLA"/>
</dbReference>
<dbReference type="PANTHER" id="PTHR31828:SF10">
    <property type="entry name" value="PHOSPHOLIPASE A1-IIDELTA"/>
    <property type="match status" value="1"/>
</dbReference>
<dbReference type="PANTHER" id="PTHR31828">
    <property type="entry name" value="PHOSPHOLIPASE A1-IIGAMMA"/>
    <property type="match status" value="1"/>
</dbReference>
<dbReference type="Pfam" id="PF01764">
    <property type="entry name" value="Lipase_3"/>
    <property type="match status" value="1"/>
</dbReference>
<dbReference type="SUPFAM" id="SSF53474">
    <property type="entry name" value="alpha/beta-Hydrolases"/>
    <property type="match status" value="1"/>
</dbReference>
<dbReference type="PROSITE" id="PS00120">
    <property type="entry name" value="LIPASE_SER"/>
    <property type="match status" value="1"/>
</dbReference>
<reference key="1">
    <citation type="journal article" date="1999" name="Nature">
        <title>Sequence and analysis of chromosome 2 of the plant Arabidopsis thaliana.</title>
        <authorList>
            <person name="Lin X."/>
            <person name="Kaul S."/>
            <person name="Rounsley S.D."/>
            <person name="Shea T.P."/>
            <person name="Benito M.-I."/>
            <person name="Town C.D."/>
            <person name="Fujii C.Y."/>
            <person name="Mason T.M."/>
            <person name="Bowman C.L."/>
            <person name="Barnstead M.E."/>
            <person name="Feldblyum T.V."/>
            <person name="Buell C.R."/>
            <person name="Ketchum K.A."/>
            <person name="Lee J.J."/>
            <person name="Ronning C.M."/>
            <person name="Koo H.L."/>
            <person name="Moffat K.S."/>
            <person name="Cronin L.A."/>
            <person name="Shen M."/>
            <person name="Pai G."/>
            <person name="Van Aken S."/>
            <person name="Umayam L."/>
            <person name="Tallon L.J."/>
            <person name="Gill J.E."/>
            <person name="Adams M.D."/>
            <person name="Carrera A.J."/>
            <person name="Creasy T.H."/>
            <person name="Goodman H.M."/>
            <person name="Somerville C.R."/>
            <person name="Copenhaver G.P."/>
            <person name="Preuss D."/>
            <person name="Nierman W.C."/>
            <person name="White O."/>
            <person name="Eisen J.A."/>
            <person name="Salzberg S.L."/>
            <person name="Fraser C.M."/>
            <person name="Venter J.C."/>
        </authorList>
    </citation>
    <scope>NUCLEOTIDE SEQUENCE [LARGE SCALE GENOMIC DNA]</scope>
    <source>
        <strain>cv. Columbia</strain>
    </source>
</reference>
<reference key="2">
    <citation type="journal article" date="2017" name="Plant J.">
        <title>Araport11: a complete reannotation of the Arabidopsis thaliana reference genome.</title>
        <authorList>
            <person name="Cheng C.Y."/>
            <person name="Krishnakumar V."/>
            <person name="Chan A.P."/>
            <person name="Thibaud-Nissen F."/>
            <person name="Schobel S."/>
            <person name="Town C.D."/>
        </authorList>
    </citation>
    <scope>GENOME REANNOTATION</scope>
    <source>
        <strain>cv. Columbia</strain>
    </source>
</reference>
<reference key="3">
    <citation type="journal article" date="2003" name="Science">
        <title>Empirical analysis of transcriptional activity in the Arabidopsis genome.</title>
        <authorList>
            <person name="Yamada K."/>
            <person name="Lim J."/>
            <person name="Dale J.M."/>
            <person name="Chen H."/>
            <person name="Shinn P."/>
            <person name="Palm C.J."/>
            <person name="Southwick A.M."/>
            <person name="Wu H.C."/>
            <person name="Kim C.J."/>
            <person name="Nguyen M."/>
            <person name="Pham P.K."/>
            <person name="Cheuk R.F."/>
            <person name="Karlin-Newmann G."/>
            <person name="Liu S.X."/>
            <person name="Lam B."/>
            <person name="Sakano H."/>
            <person name="Wu T."/>
            <person name="Yu G."/>
            <person name="Miranda M."/>
            <person name="Quach H.L."/>
            <person name="Tripp M."/>
            <person name="Chang C.H."/>
            <person name="Lee J.M."/>
            <person name="Toriumi M.J."/>
            <person name="Chan M.M."/>
            <person name="Tang C.C."/>
            <person name="Onodera C.S."/>
            <person name="Deng J.M."/>
            <person name="Akiyama K."/>
            <person name="Ansari Y."/>
            <person name="Arakawa T."/>
            <person name="Banh J."/>
            <person name="Banno F."/>
            <person name="Bowser L."/>
            <person name="Brooks S.Y."/>
            <person name="Carninci P."/>
            <person name="Chao Q."/>
            <person name="Choy N."/>
            <person name="Enju A."/>
            <person name="Goldsmith A.D."/>
            <person name="Gurjal M."/>
            <person name="Hansen N.F."/>
            <person name="Hayashizaki Y."/>
            <person name="Johnson-Hopson C."/>
            <person name="Hsuan V.W."/>
            <person name="Iida K."/>
            <person name="Karnes M."/>
            <person name="Khan S."/>
            <person name="Koesema E."/>
            <person name="Ishida J."/>
            <person name="Jiang P.X."/>
            <person name="Jones T."/>
            <person name="Kawai J."/>
            <person name="Kamiya A."/>
            <person name="Meyers C."/>
            <person name="Nakajima M."/>
            <person name="Narusaka M."/>
            <person name="Seki M."/>
            <person name="Sakurai T."/>
            <person name="Satou M."/>
            <person name="Tamse R."/>
            <person name="Vaysberg M."/>
            <person name="Wallender E.K."/>
            <person name="Wong C."/>
            <person name="Yamamura Y."/>
            <person name="Yuan S."/>
            <person name="Shinozaki K."/>
            <person name="Davis R.W."/>
            <person name="Theologis A."/>
            <person name="Ecker J.R."/>
        </authorList>
    </citation>
    <scope>NUCLEOTIDE SEQUENCE [LARGE SCALE MRNA] (ISOFORM 1)</scope>
    <source>
        <strain>cv. Columbia</strain>
    </source>
</reference>
<reference key="4">
    <citation type="journal article" date="2009" name="DNA Res.">
        <title>Analysis of multiple occurrences of alternative splicing events in Arabidopsis thaliana using novel sequenced full-length cDNAs.</title>
        <authorList>
            <person name="Iida K."/>
            <person name="Fukami-Kobayashi K."/>
            <person name="Toyoda A."/>
            <person name="Sakaki Y."/>
            <person name="Kobayashi M."/>
            <person name="Seki M."/>
            <person name="Shinozaki K."/>
        </authorList>
    </citation>
    <scope>NUCLEOTIDE SEQUENCE [LARGE SCALE MRNA] (ISOFORM 2)</scope>
    <source>
        <strain>cv. Columbia</strain>
        <tissue>Rosette leaf</tissue>
    </source>
</reference>
<reference key="5">
    <citation type="journal article" date="2004" name="Plant Physiol.">
        <title>Characterization of an ultraviolet B-induced lipase in Arabidopsis.</title>
        <authorList>
            <person name="Lo M."/>
            <person name="Taylor C."/>
            <person name="Wang L."/>
            <person name="Nowack L."/>
            <person name="Wang T.W."/>
            <person name="Thompson J."/>
        </authorList>
    </citation>
    <scope>FUNCTION</scope>
    <scope>DISRUPTION PHENOTYPE</scope>
    <scope>SUBCELLULAR LOCATION</scope>
    <scope>TISSUE SPECIFICITY</scope>
    <scope>INDUCTION BY UV-B RADIATION AND SENESCENCE</scope>
    <source>
        <strain>cv. Columbia</strain>
    </source>
</reference>
<reference key="6">
    <citation type="journal article" date="2004" name="Trends Plant Sci.">
        <title>Phospholipid-derived signaling mediated by phospholipase A in plants.</title>
        <authorList>
            <person name="Ryu S.B."/>
        </authorList>
    </citation>
    <scope>GENE FAMILY</scope>
    <scope>NOMENCLATURE</scope>
</reference>
<reference key="7">
    <citation type="journal article" date="2012" name="Mol. Cell. Proteomics">
        <title>Comparative large-scale characterisation of plant vs. mammal proteins reveals similar and idiosyncratic N-alpha acetylation features.</title>
        <authorList>
            <person name="Bienvenut W.V."/>
            <person name="Sumpton D."/>
            <person name="Martinez A."/>
            <person name="Lilla S."/>
            <person name="Espagne C."/>
            <person name="Meinnel T."/>
            <person name="Giglione C."/>
        </authorList>
    </citation>
    <scope>ACETYLATION [LARGE SCALE ANALYSIS] AT ALA-2</scope>
    <scope>CLEAVAGE OF INITIATOR METHIONINE [LARGE SCALE ANALYSIS]</scope>
    <scope>IDENTIFICATION BY MASS SPECTROMETRY [LARGE SCALE ANALYSIS]</scope>
</reference>
<proteinExistence type="evidence at protein level"/>
<sequence length="412" mass="46057">MATTTTSWEELLGSKNWDTILDPLDQSLRELILRCGDFCQATYDAFVNDQNSKYCGASRYGKSSFFDKVMLENASDYEVVNFLYATARVSLPEGLLLQSQSRDSWDRESNWFGYIAVTSDERSKALGRREIYIALRGTSRNYEWVNVLGARPTSADPLLHGPEQDGSGGVVEGTTFDSDSEDEEGCKVMLGWLTIYTSNHPESKFTKLSLRSQLLAKIKELLLKYKDEKPSIVLTGHSLGATEAVLAAYDIAENGSSDDVPVTAIVFGCPQVGNKEFRDEVMSHKNLKILHVRNTIDLLTRYPGGLLGYVDIGINFVIDTKKSPFLSDSRNPGDWHNLQAMLHVVAGWNGKKGEFKLMVKRSIALVNKSCEFLKAECLVPGSWWVEKNKGLIKNEDGEWVLAPVEEEPVPEF</sequence>
<protein>
    <recommendedName>
        <fullName>Phospholipase A1-IIdelta</fullName>
        <ecNumber>3.1.1.-</ecNumber>
    </recommendedName>
</protein>
<gene>
    <name type="ordered locus">At2g42690</name>
    <name type="ORF">F14N22.2</name>
</gene>